<gene>
    <name evidence="7" type="primary">Cavin3</name>
    <name type="synonym">Dig2</name>
    <name type="synonym">Prkcdbp</name>
    <name type="synonym">Srbc</name>
</gene>
<evidence type="ECO:0000250" key="1">
    <source>
        <dbReference type="UniProtKB" id="Q91VJ2"/>
    </source>
</evidence>
<evidence type="ECO:0000250" key="2">
    <source>
        <dbReference type="UniProtKB" id="Q969G5"/>
    </source>
</evidence>
<evidence type="ECO:0000256" key="3">
    <source>
        <dbReference type="SAM" id="MobiDB-lite"/>
    </source>
</evidence>
<evidence type="ECO:0000269" key="4">
    <source>
    </source>
</evidence>
<evidence type="ECO:0000269" key="5">
    <source>
    </source>
</evidence>
<evidence type="ECO:0000305" key="6"/>
<evidence type="ECO:0000312" key="7">
    <source>
        <dbReference type="RGD" id="628755"/>
    </source>
</evidence>
<evidence type="ECO:0007744" key="8">
    <source>
    </source>
</evidence>
<proteinExistence type="evidence at protein level"/>
<organism>
    <name type="scientific">Rattus norvegicus</name>
    <name type="common">Rat</name>
    <dbReference type="NCBI Taxonomy" id="10116"/>
    <lineage>
        <taxon>Eukaryota</taxon>
        <taxon>Metazoa</taxon>
        <taxon>Chordata</taxon>
        <taxon>Craniata</taxon>
        <taxon>Vertebrata</taxon>
        <taxon>Euteleostomi</taxon>
        <taxon>Mammalia</taxon>
        <taxon>Eutheria</taxon>
        <taxon>Euarchontoglires</taxon>
        <taxon>Glires</taxon>
        <taxon>Rodentia</taxon>
        <taxon>Myomorpha</taxon>
        <taxon>Muroidea</taxon>
        <taxon>Muridae</taxon>
        <taxon>Murinae</taxon>
        <taxon>Rattus</taxon>
    </lineage>
</organism>
<feature type="chain" id="PRO_0000331414" description="Caveolae-associated protein 3">
    <location>
        <begin position="1"/>
        <end position="263"/>
    </location>
</feature>
<feature type="region of interest" description="Interaction with CAVIN1" evidence="1">
    <location>
        <begin position="1"/>
        <end position="84"/>
    </location>
</feature>
<feature type="region of interest" description="Leucine-zipper" evidence="2">
    <location>
        <begin position="20"/>
        <end position="78"/>
    </location>
</feature>
<feature type="region of interest" description="Interaction with CAV1" evidence="1">
    <location>
        <begin position="135"/>
        <end position="203"/>
    </location>
</feature>
<feature type="region of interest" description="Disordered" evidence="3">
    <location>
        <begin position="141"/>
        <end position="263"/>
    </location>
</feature>
<feature type="compositionally biased region" description="Acidic residues" evidence="3">
    <location>
        <begin position="157"/>
        <end position="170"/>
    </location>
</feature>
<feature type="compositionally biased region" description="Low complexity" evidence="3">
    <location>
        <begin position="219"/>
        <end position="234"/>
    </location>
</feature>
<feature type="modified residue" description="Phosphoserine" evidence="8">
    <location>
        <position position="62"/>
    </location>
</feature>
<feature type="modified residue" description="Phosphoserine" evidence="2">
    <location>
        <position position="70"/>
    </location>
</feature>
<feature type="modified residue" description="Phosphoserine" evidence="2">
    <location>
        <position position="165"/>
    </location>
</feature>
<feature type="modified residue" description="Phosphoserine" evidence="2">
    <location>
        <position position="166"/>
    </location>
</feature>
<feature type="modified residue" description="Phosphoserine" evidence="1">
    <location>
        <position position="173"/>
    </location>
</feature>
<feature type="modified residue" description="Phosphoserine" evidence="8">
    <location>
        <position position="199"/>
    </location>
</feature>
<feature type="cross-link" description="Glycyl lysine isopeptide (Lys-Gly) (interchain with G-Cter in SUMO2)" evidence="2">
    <location>
        <position position="128"/>
    </location>
</feature>
<feature type="sequence conflict" description="In Ref. 3; AAB39982." evidence="6" ref="3">
    <original>A</original>
    <variation>V</variation>
    <location>
        <position position="5"/>
    </location>
</feature>
<keyword id="KW-0090">Biological rhythms</keyword>
<keyword id="KW-0963">Cytoplasm</keyword>
<keyword id="KW-1017">Isopeptide bond</keyword>
<keyword id="KW-0472">Membrane</keyword>
<keyword id="KW-0597">Phosphoprotein</keyword>
<keyword id="KW-1185">Reference proteome</keyword>
<keyword id="KW-0043">Tumor suppressor</keyword>
<keyword id="KW-0832">Ubl conjugation</keyword>
<protein>
    <recommendedName>
        <fullName evidence="7">Caveolae-associated protein 3</fullName>
    </recommendedName>
    <alternativeName>
        <fullName>Cavin-3</fullName>
    </alternativeName>
    <alternativeName>
        <fullName>D3T-inducible gene 2 protein</fullName>
        <shortName>DIG-2</shortName>
    </alternativeName>
    <alternativeName>
        <fullName>Dithiolethione-inducible gene 2 protein</fullName>
    </alternativeName>
    <alternativeName>
        <fullName>Protein kinase C delta-binding protein</fullName>
    </alternativeName>
    <alternativeName>
        <fullName>Serum deprivation response factor-related gene product that binds to C-kinase</fullName>
    </alternativeName>
</protein>
<name>CAVN3_RAT</name>
<dbReference type="EMBL" id="D85435">
    <property type="protein sequence ID" value="BAA36277.1"/>
    <property type="molecule type" value="mRNA"/>
</dbReference>
<dbReference type="EMBL" id="BC101398">
    <property type="protein sequence ID" value="AAI01399.1"/>
    <property type="molecule type" value="mRNA"/>
</dbReference>
<dbReference type="EMBL" id="U66323">
    <property type="protein sequence ID" value="AAB39982.1"/>
    <property type="molecule type" value="mRNA"/>
</dbReference>
<dbReference type="RefSeq" id="NP_604444.1">
    <property type="nucleotide sequence ID" value="NM_134449.1"/>
</dbReference>
<dbReference type="SMR" id="Q9Z1H9"/>
<dbReference type="BioGRID" id="250084">
    <property type="interactions" value="1"/>
</dbReference>
<dbReference type="FunCoup" id="Q9Z1H9">
    <property type="interactions" value="123"/>
</dbReference>
<dbReference type="STRING" id="10116.ENSRNOP00000024119"/>
<dbReference type="GlyGen" id="Q9Z1H9">
    <property type="glycosylation" value="1 site"/>
</dbReference>
<dbReference type="iPTMnet" id="Q9Z1H9"/>
<dbReference type="PhosphoSitePlus" id="Q9Z1H9"/>
<dbReference type="SwissPalm" id="Q9Z1H9"/>
<dbReference type="PaxDb" id="10116-ENSRNOP00000024119"/>
<dbReference type="GeneID" id="85332"/>
<dbReference type="KEGG" id="rno:85332"/>
<dbReference type="UCSC" id="RGD:628755">
    <property type="organism name" value="rat"/>
</dbReference>
<dbReference type="AGR" id="RGD:628755"/>
<dbReference type="CTD" id="112464"/>
<dbReference type="RGD" id="628755">
    <property type="gene designation" value="Cavin3"/>
</dbReference>
<dbReference type="VEuPathDB" id="HostDB:ENSRNOG00000017914"/>
<dbReference type="eggNOG" id="ENOG502QQCA">
    <property type="taxonomic scope" value="Eukaryota"/>
</dbReference>
<dbReference type="HOGENOM" id="CLU_093512_0_0_1"/>
<dbReference type="InParanoid" id="Q9Z1H9"/>
<dbReference type="OrthoDB" id="9451657at2759"/>
<dbReference type="PhylomeDB" id="Q9Z1H9"/>
<dbReference type="TreeFam" id="TF331031"/>
<dbReference type="PRO" id="PR:Q9Z1H9"/>
<dbReference type="Proteomes" id="UP000002494">
    <property type="component" value="Chromosome 1"/>
</dbReference>
<dbReference type="Bgee" id="ENSRNOG00000017914">
    <property type="expression patterns" value="Expressed in heart and 20 other cell types or tissues"/>
</dbReference>
<dbReference type="GO" id="GO:0005901">
    <property type="term" value="C:caveola"/>
    <property type="evidence" value="ECO:0000250"/>
    <property type="project" value="UniProtKB"/>
</dbReference>
<dbReference type="GO" id="GO:0005737">
    <property type="term" value="C:cytoplasm"/>
    <property type="evidence" value="ECO:0000250"/>
    <property type="project" value="UniProtKB"/>
</dbReference>
<dbReference type="GO" id="GO:0005829">
    <property type="term" value="C:cytosol"/>
    <property type="evidence" value="ECO:0007669"/>
    <property type="project" value="UniProtKB-SubCell"/>
</dbReference>
<dbReference type="GO" id="GO:0032991">
    <property type="term" value="C:protein-containing complex"/>
    <property type="evidence" value="ECO:0000266"/>
    <property type="project" value="RGD"/>
</dbReference>
<dbReference type="GO" id="GO:0005080">
    <property type="term" value="F:protein kinase C binding"/>
    <property type="evidence" value="ECO:0000314"/>
    <property type="project" value="RGD"/>
</dbReference>
<dbReference type="GO" id="GO:0032922">
    <property type="term" value="P:circadian regulation of gene expression"/>
    <property type="evidence" value="ECO:0000250"/>
    <property type="project" value="UniProtKB"/>
</dbReference>
<dbReference type="GO" id="GO:0030866">
    <property type="term" value="P:cortical actin cytoskeleton organization"/>
    <property type="evidence" value="ECO:0000266"/>
    <property type="project" value="RGD"/>
</dbReference>
<dbReference type="GO" id="GO:1901003">
    <property type="term" value="P:negative regulation of fermentation"/>
    <property type="evidence" value="ECO:0000266"/>
    <property type="project" value="RGD"/>
</dbReference>
<dbReference type="GO" id="GO:0051898">
    <property type="term" value="P:negative regulation of phosphatidylinositol 3-kinase/protein kinase B signal transduction"/>
    <property type="evidence" value="ECO:0000266"/>
    <property type="project" value="RGD"/>
</dbReference>
<dbReference type="GO" id="GO:0070374">
    <property type="term" value="P:positive regulation of ERK1 and ERK2 cascade"/>
    <property type="evidence" value="ECO:0000266"/>
    <property type="project" value="RGD"/>
</dbReference>
<dbReference type="GO" id="GO:0001558">
    <property type="term" value="P:regulation of cell growth"/>
    <property type="evidence" value="ECO:0000303"/>
    <property type="project" value="RGD"/>
</dbReference>
<dbReference type="InterPro" id="IPR026752">
    <property type="entry name" value="Cavin_fam"/>
</dbReference>
<dbReference type="PANTHER" id="PTHR15240:SF2">
    <property type="entry name" value="CAVEOLAE-ASSOCIATED PROTEIN 3"/>
    <property type="match status" value="1"/>
</dbReference>
<dbReference type="PANTHER" id="PTHR15240">
    <property type="entry name" value="CAVIN"/>
    <property type="match status" value="1"/>
</dbReference>
<dbReference type="Pfam" id="PF15237">
    <property type="entry name" value="PTRF_SDPR"/>
    <property type="match status" value="1"/>
</dbReference>
<comment type="function">
    <text evidence="1 2 4">Regulates the traffic and/or budding of caveolae. Plays a role in caveola formation in a tissue-specific manner. Required for the formation of caveolae in smooth muscle but not in the lung and heart endothelial cells. Regulates the equilibrium between cell surface-associated and cell surface-dissociated caveolae by promoting the rapid release of caveolae from the cell surface. Plays a role in the regulation of the circadian clock. Modulates the period length and phase of circadian gene expression and also regulates expression and interaction of the core clock components PER1/2 and CRY1/2 (By similarity). Seems to have an immune potentiation function, especially in the glioma (PubMed:15197346).</text>
</comment>
<comment type="subunit">
    <text evidence="1 2">Component of the CAVIN complex composed of CAVIN1, CAVIN2, CAVIN3 and CAVIN4. Interacts with PRKCD and with phosphatidylserine. Phosphatidylserine may form a bridge between PKC and PKC-binding partners and stabilize the binding. Interacts with PER2. Interacts with CAVIN1 and EPS15L1. Interacts (via leucine-zipper domain) with CAV1 in a cholesterol-sensitive manner.</text>
</comment>
<comment type="subcellular location">
    <subcellularLocation>
        <location evidence="1">Cytoplasm</location>
    </subcellularLocation>
    <subcellularLocation>
        <location evidence="1">Membrane</location>
        <location evidence="1">Caveola</location>
    </subcellularLocation>
    <subcellularLocation>
        <location evidence="1">Cytoplasm</location>
        <location evidence="1">Cytosol</location>
    </subcellularLocation>
    <text evidence="1">Localizes in the caveolae in a caveolin-dependent manner.</text>
</comment>
<comment type="induction">
    <text evidence="5">Up-regulated by 1,2-dithiole-3-thione (D3T).</text>
</comment>
<comment type="domain">
    <text evidence="2">The leucine-zipper domain is essential for its localization in the caveolae and for its interaction with CAV1 and EPS15L1.</text>
</comment>
<comment type="PTM">
    <text evidence="1">In vitro, phosphorylated by PRKCD.</text>
</comment>
<comment type="similarity">
    <text evidence="6">Belongs to the CAVIN family.</text>
</comment>
<reference key="1">
    <citation type="journal article" date="1997" name="J. Biol. Chem.">
        <title>A protein kinase Cdelta-binding protein SRBC whose expression is induced by serum starvation.</title>
        <authorList>
            <person name="Izumi Y."/>
            <person name="Hirai S."/>
            <person name="Tamai Y."/>
            <person name="Fujise-Matsuoka A."/>
            <person name="Nishimura Y."/>
            <person name="Ohno S."/>
        </authorList>
    </citation>
    <scope>NUCLEOTIDE SEQUENCE [MRNA]</scope>
    <scope>PHOSPHORYLATION BY PRKCD</scope>
</reference>
<reference key="2">
    <citation type="journal article" date="2004" name="Genome Res.">
        <title>The status, quality, and expansion of the NIH full-length cDNA project: the Mammalian Gene Collection (MGC).</title>
        <authorList>
            <consortium name="The MGC Project Team"/>
        </authorList>
    </citation>
    <scope>NUCLEOTIDE SEQUENCE [LARGE SCALE MRNA]</scope>
    <source>
        <tissue>Prostate</tissue>
    </source>
</reference>
<reference key="3">
    <citation type="journal article" date="1996" name="Carcinogenesis">
        <title>Isolation of cDNAs representing dithiolethione-responsive genes.</title>
        <authorList>
            <person name="Primiano T."/>
            <person name="Gastel J.A."/>
            <person name="Kensler T.W."/>
            <person name="Sutter T.R."/>
        </authorList>
    </citation>
    <scope>NUCLEOTIDE SEQUENCE [MRNA] OF 1-79</scope>
    <scope>INDUCTION BY DITHIOLETHIONE</scope>
    <source>
        <strain>Fischer 344</strain>
    </source>
</reference>
<reference key="4">
    <citation type="journal article" date="2004" name="Cancer Biol. Ther.">
        <title>Differential regulation of the protein tyrosine kinase activity following interleukin-2 (IL-2), interferron gamma (IFN-gamma) and SRBC administration in brain tumor-induced conditions: SRBC acting as a dual potentiator in regulating the cytokine profile.</title>
        <authorList>
            <person name="Bhattacharjee M."/>
            <person name="Sarkar S."/>
            <person name="Dutta S."/>
            <person name="Begum Z."/>
            <person name="Roy U.R."/>
            <person name="Chaudhuri S."/>
            <person name="Chaudhuri S."/>
        </authorList>
    </citation>
    <scope>FUNCTION</scope>
</reference>
<reference key="5">
    <citation type="journal article" date="2012" name="Nat. Commun.">
        <title>Quantitative maps of protein phosphorylation sites across 14 different rat organs and tissues.</title>
        <authorList>
            <person name="Lundby A."/>
            <person name="Secher A."/>
            <person name="Lage K."/>
            <person name="Nordsborg N.B."/>
            <person name="Dmytriyev A."/>
            <person name="Lundby C."/>
            <person name="Olsen J.V."/>
        </authorList>
    </citation>
    <scope>PHOSPHORYLATION [LARGE SCALE ANALYSIS] AT SER-62 AND SER-199</scope>
    <scope>IDENTIFICATION BY MASS SPECTROMETRY [LARGE SCALE ANALYSIS]</scope>
</reference>
<accession>Q9Z1H9</accession>
<accession>P97585</accession>
<sequence length="263" mass="27910">MGESALEPGPVPGAPAGGPVHAVTVVTLLEKLATMLEALRERQGGLAERQGGLAGSVRRIQSGLGALSRSHDTTSNTLAQLLAKAERVGSHADAAQERAVHRAAQVQRLEANHGLLVARGKLHVLLFKEETEIPARAFQKAPELLGPEDQLVLGPEQPEDEVGESSDEEPVESRAQRLRRTGLQKVQSLKRAFSSRKGSEAAQPTPVKPPRLGPVRNSEGPAEGQPAAQPAMEPVLPSALEPEPPQPTKEDPERPVLQIESAA</sequence>